<comment type="function">
    <text evidence="1">Catalyzes the 2-thiolation of uridine at the wobble position (U34) of tRNA, leading to the formation of s(2)U34.</text>
</comment>
<comment type="catalytic activity">
    <reaction evidence="1">
        <text>S-sulfanyl-L-cysteinyl-[protein] + uridine(34) in tRNA + AH2 + ATP = 2-thiouridine(34) in tRNA + L-cysteinyl-[protein] + A + AMP + diphosphate + H(+)</text>
        <dbReference type="Rhea" id="RHEA:47032"/>
        <dbReference type="Rhea" id="RHEA-COMP:10131"/>
        <dbReference type="Rhea" id="RHEA-COMP:11726"/>
        <dbReference type="Rhea" id="RHEA-COMP:11727"/>
        <dbReference type="Rhea" id="RHEA-COMP:11728"/>
        <dbReference type="ChEBI" id="CHEBI:13193"/>
        <dbReference type="ChEBI" id="CHEBI:15378"/>
        <dbReference type="ChEBI" id="CHEBI:17499"/>
        <dbReference type="ChEBI" id="CHEBI:29950"/>
        <dbReference type="ChEBI" id="CHEBI:30616"/>
        <dbReference type="ChEBI" id="CHEBI:33019"/>
        <dbReference type="ChEBI" id="CHEBI:61963"/>
        <dbReference type="ChEBI" id="CHEBI:65315"/>
        <dbReference type="ChEBI" id="CHEBI:87170"/>
        <dbReference type="ChEBI" id="CHEBI:456215"/>
        <dbReference type="EC" id="2.8.1.13"/>
    </reaction>
</comment>
<comment type="subcellular location">
    <subcellularLocation>
        <location evidence="1">Cytoplasm</location>
    </subcellularLocation>
</comment>
<comment type="similarity">
    <text evidence="1">Belongs to the MnmA/TRMU family.</text>
</comment>
<accession>B2S746</accession>
<dbReference type="EC" id="2.8.1.13" evidence="1"/>
<dbReference type="EMBL" id="CP000887">
    <property type="protein sequence ID" value="ACD72993.1"/>
    <property type="molecule type" value="Genomic_DNA"/>
</dbReference>
<dbReference type="SMR" id="B2S746"/>
<dbReference type="KEGG" id="bmc:BAbS19_I15030"/>
<dbReference type="HOGENOM" id="CLU_035188_0_1_5"/>
<dbReference type="Proteomes" id="UP000002565">
    <property type="component" value="Chromosome 1"/>
</dbReference>
<dbReference type="GO" id="GO:0005737">
    <property type="term" value="C:cytoplasm"/>
    <property type="evidence" value="ECO:0007669"/>
    <property type="project" value="UniProtKB-SubCell"/>
</dbReference>
<dbReference type="GO" id="GO:0005524">
    <property type="term" value="F:ATP binding"/>
    <property type="evidence" value="ECO:0007669"/>
    <property type="project" value="UniProtKB-KW"/>
</dbReference>
<dbReference type="GO" id="GO:0000049">
    <property type="term" value="F:tRNA binding"/>
    <property type="evidence" value="ECO:0007669"/>
    <property type="project" value="UniProtKB-KW"/>
</dbReference>
<dbReference type="GO" id="GO:0103016">
    <property type="term" value="F:tRNA-uridine 2-sulfurtransferase activity"/>
    <property type="evidence" value="ECO:0007669"/>
    <property type="project" value="UniProtKB-EC"/>
</dbReference>
<dbReference type="GO" id="GO:0002143">
    <property type="term" value="P:tRNA wobble position uridine thiolation"/>
    <property type="evidence" value="ECO:0007669"/>
    <property type="project" value="TreeGrafter"/>
</dbReference>
<dbReference type="CDD" id="cd01998">
    <property type="entry name" value="MnmA_TRMU-like"/>
    <property type="match status" value="1"/>
</dbReference>
<dbReference type="FunFam" id="2.30.30.280:FF:000001">
    <property type="entry name" value="tRNA-specific 2-thiouridylase MnmA"/>
    <property type="match status" value="1"/>
</dbReference>
<dbReference type="FunFam" id="3.40.50.620:FF:000115">
    <property type="entry name" value="tRNA-specific 2-thiouridylase MnmA"/>
    <property type="match status" value="1"/>
</dbReference>
<dbReference type="Gene3D" id="2.30.30.280">
    <property type="entry name" value="Adenine nucleotide alpha hydrolases-like domains"/>
    <property type="match status" value="1"/>
</dbReference>
<dbReference type="Gene3D" id="3.40.50.620">
    <property type="entry name" value="HUPs"/>
    <property type="match status" value="1"/>
</dbReference>
<dbReference type="Gene3D" id="2.40.30.10">
    <property type="entry name" value="Translation factors"/>
    <property type="match status" value="1"/>
</dbReference>
<dbReference type="HAMAP" id="MF_00144">
    <property type="entry name" value="tRNA_thiouridyl_MnmA"/>
    <property type="match status" value="1"/>
</dbReference>
<dbReference type="InterPro" id="IPR004506">
    <property type="entry name" value="MnmA-like"/>
</dbReference>
<dbReference type="InterPro" id="IPR046885">
    <property type="entry name" value="MnmA-like_C"/>
</dbReference>
<dbReference type="InterPro" id="IPR046884">
    <property type="entry name" value="MnmA-like_central"/>
</dbReference>
<dbReference type="InterPro" id="IPR023382">
    <property type="entry name" value="MnmA-like_central_sf"/>
</dbReference>
<dbReference type="InterPro" id="IPR014729">
    <property type="entry name" value="Rossmann-like_a/b/a_fold"/>
</dbReference>
<dbReference type="NCBIfam" id="NF001138">
    <property type="entry name" value="PRK00143.1"/>
    <property type="match status" value="1"/>
</dbReference>
<dbReference type="NCBIfam" id="TIGR00420">
    <property type="entry name" value="trmU"/>
    <property type="match status" value="1"/>
</dbReference>
<dbReference type="PANTHER" id="PTHR11933:SF5">
    <property type="entry name" value="MITOCHONDRIAL TRNA-SPECIFIC 2-THIOURIDYLASE 1"/>
    <property type="match status" value="1"/>
</dbReference>
<dbReference type="PANTHER" id="PTHR11933">
    <property type="entry name" value="TRNA 5-METHYLAMINOMETHYL-2-THIOURIDYLATE -METHYLTRANSFERASE"/>
    <property type="match status" value="1"/>
</dbReference>
<dbReference type="Pfam" id="PF03054">
    <property type="entry name" value="tRNA_Me_trans"/>
    <property type="match status" value="1"/>
</dbReference>
<dbReference type="Pfam" id="PF20258">
    <property type="entry name" value="tRNA_Me_trans_C"/>
    <property type="match status" value="1"/>
</dbReference>
<dbReference type="Pfam" id="PF20259">
    <property type="entry name" value="tRNA_Me_trans_M"/>
    <property type="match status" value="1"/>
</dbReference>
<dbReference type="SUPFAM" id="SSF52402">
    <property type="entry name" value="Adenine nucleotide alpha hydrolases-like"/>
    <property type="match status" value="1"/>
</dbReference>
<feature type="chain" id="PRO_1000096286" description="tRNA-specific 2-thiouridylase MnmA">
    <location>
        <begin position="1"/>
        <end position="398"/>
    </location>
</feature>
<feature type="region of interest" description="Interaction with tRNA" evidence="1">
    <location>
        <begin position="160"/>
        <end position="162"/>
    </location>
</feature>
<feature type="active site" description="Nucleophile" evidence="1">
    <location>
        <position position="114"/>
    </location>
</feature>
<feature type="active site" description="Cysteine persulfide intermediate" evidence="1">
    <location>
        <position position="210"/>
    </location>
</feature>
<feature type="binding site" evidence="1">
    <location>
        <begin position="20"/>
        <end position="27"/>
    </location>
    <ligand>
        <name>ATP</name>
        <dbReference type="ChEBI" id="CHEBI:30616"/>
    </ligand>
</feature>
<feature type="binding site" evidence="1">
    <location>
        <position position="46"/>
    </location>
    <ligand>
        <name>ATP</name>
        <dbReference type="ChEBI" id="CHEBI:30616"/>
    </ligand>
</feature>
<feature type="binding site" evidence="1">
    <location>
        <position position="138"/>
    </location>
    <ligand>
        <name>ATP</name>
        <dbReference type="ChEBI" id="CHEBI:30616"/>
    </ligand>
</feature>
<feature type="site" description="Interaction with tRNA" evidence="1">
    <location>
        <position position="139"/>
    </location>
</feature>
<feature type="site" description="Interaction with tRNA" evidence="1">
    <location>
        <position position="352"/>
    </location>
</feature>
<feature type="disulfide bond" description="Alternate" evidence="1">
    <location>
        <begin position="114"/>
        <end position="210"/>
    </location>
</feature>
<organism>
    <name type="scientific">Brucella abortus (strain S19)</name>
    <dbReference type="NCBI Taxonomy" id="430066"/>
    <lineage>
        <taxon>Bacteria</taxon>
        <taxon>Pseudomonadati</taxon>
        <taxon>Pseudomonadota</taxon>
        <taxon>Alphaproteobacteria</taxon>
        <taxon>Hyphomicrobiales</taxon>
        <taxon>Brucellaceae</taxon>
        <taxon>Brucella/Ochrobactrum group</taxon>
        <taxon>Brucella</taxon>
    </lineage>
</organism>
<keyword id="KW-0067">ATP-binding</keyword>
<keyword id="KW-0963">Cytoplasm</keyword>
<keyword id="KW-1015">Disulfide bond</keyword>
<keyword id="KW-0547">Nucleotide-binding</keyword>
<keyword id="KW-0694">RNA-binding</keyword>
<keyword id="KW-0808">Transferase</keyword>
<keyword id="KW-0819">tRNA processing</keyword>
<keyword id="KW-0820">tRNA-binding</keyword>
<sequence>MSLNSLDLPGKPEDTRVVVAMSGGVDSSVVAGILKREGYDVVGVTLQLYDHGAAVHRAGSCCAGQDIEDARRVSESLGIPHYVLDYEARFREAVIDPFANSYVSGETPIPCVSCNQTVKFADLLQTARDLGADALATGHYIRSRANGAHRALYRPVDTDRDQSYFLFATTQEQIDYLRFPLGHLPKAQVREIAEELGLTVAKKQDSQDICFVPQGKYSDIISRLKPEAANPGDIVHIDGRTLGRHDGIVHYTVGQRRGIGVATGEALYVVHLDAANARVIVGPREALETHKVFLRDVNWLGDTPIADLPKSGMEVFAKVRSTRPPRPAVLRHADGQTWVELVDGESGIAPGQACVLYSDDSNAARVFGGGFIGRSEREPQAEEMLRRLMANADKASAA</sequence>
<proteinExistence type="inferred from homology"/>
<protein>
    <recommendedName>
        <fullName evidence="1">tRNA-specific 2-thiouridylase MnmA</fullName>
        <ecNumber evidence="1">2.8.1.13</ecNumber>
    </recommendedName>
</protein>
<evidence type="ECO:0000255" key="1">
    <source>
        <dbReference type="HAMAP-Rule" id="MF_00144"/>
    </source>
</evidence>
<reference key="1">
    <citation type="journal article" date="2008" name="PLoS ONE">
        <title>Genome sequence of Brucella abortus vaccine strain S19 compared to virulent strains yields candidate virulence genes.</title>
        <authorList>
            <person name="Crasta O.R."/>
            <person name="Folkerts O."/>
            <person name="Fei Z."/>
            <person name="Mane S.P."/>
            <person name="Evans C."/>
            <person name="Martino-Catt S."/>
            <person name="Bricker B."/>
            <person name="Yu G."/>
            <person name="Du L."/>
            <person name="Sobral B.W."/>
        </authorList>
    </citation>
    <scope>NUCLEOTIDE SEQUENCE [LARGE SCALE GENOMIC DNA]</scope>
    <source>
        <strain>S19</strain>
    </source>
</reference>
<name>MNMA_BRUA1</name>
<gene>
    <name evidence="1" type="primary">mnmA</name>
    <name type="ordered locus">BAbS19_I15030</name>
</gene>